<proteinExistence type="inferred from homology"/>
<accession>B1I9U2</accession>
<reference key="1">
    <citation type="journal article" date="2010" name="Genome Biol.">
        <title>Structure and dynamics of the pan-genome of Streptococcus pneumoniae and closely related species.</title>
        <authorList>
            <person name="Donati C."/>
            <person name="Hiller N.L."/>
            <person name="Tettelin H."/>
            <person name="Muzzi A."/>
            <person name="Croucher N.J."/>
            <person name="Angiuoli S.V."/>
            <person name="Oggioni M."/>
            <person name="Dunning Hotopp J.C."/>
            <person name="Hu F.Z."/>
            <person name="Riley D.R."/>
            <person name="Covacci A."/>
            <person name="Mitchell T.J."/>
            <person name="Bentley S.D."/>
            <person name="Kilian M."/>
            <person name="Ehrlich G.D."/>
            <person name="Rappuoli R."/>
            <person name="Moxon E.R."/>
            <person name="Masignani V."/>
        </authorList>
    </citation>
    <scope>NUCLEOTIDE SEQUENCE [LARGE SCALE GENOMIC DNA]</scope>
    <source>
        <strain>Hungary19A-6</strain>
    </source>
</reference>
<organism>
    <name type="scientific">Streptococcus pneumoniae (strain Hungary19A-6)</name>
    <dbReference type="NCBI Taxonomy" id="487214"/>
    <lineage>
        <taxon>Bacteria</taxon>
        <taxon>Bacillati</taxon>
        <taxon>Bacillota</taxon>
        <taxon>Bacilli</taxon>
        <taxon>Lactobacillales</taxon>
        <taxon>Streptococcaceae</taxon>
        <taxon>Streptococcus</taxon>
    </lineage>
</organism>
<evidence type="ECO:0000255" key="1">
    <source>
        <dbReference type="HAMAP-Rule" id="MF_00012"/>
    </source>
</evidence>
<gene>
    <name evidence="1" type="primary">ilvD</name>
    <name type="ordered locus">SPH_2318</name>
</gene>
<protein>
    <recommendedName>
        <fullName evidence="1">Dihydroxy-acid dehydratase</fullName>
        <shortName evidence="1">DAD</shortName>
        <ecNumber evidence="1">4.2.1.9</ecNumber>
    </recommendedName>
</protein>
<keyword id="KW-0001">2Fe-2S</keyword>
<keyword id="KW-0028">Amino-acid biosynthesis</keyword>
<keyword id="KW-0100">Branched-chain amino acid biosynthesis</keyword>
<keyword id="KW-0408">Iron</keyword>
<keyword id="KW-0411">Iron-sulfur</keyword>
<keyword id="KW-0456">Lyase</keyword>
<keyword id="KW-0460">Magnesium</keyword>
<keyword id="KW-0479">Metal-binding</keyword>
<name>ILVD_STRPI</name>
<sequence length="567" mass="59859">MTELDKRHRSSIYDSMVKSPNRAMLRATGMTDKDFETSIVGVISTWAENTPCNIHLHDFGKLAKEGVKSAGAWPVQFGTITVADGIAMGTPGMRFSLTSRDIIADSIEAAMSGHNVDAFVAIGGCDKNMPGSMIAIANMDIPAIFAYGGTIAPGNLDGKDIDLVSVFEGIGKWNHGDMTAEDVKRLECNACPGPGGCGGMYTANTMATAIEVLGMSLPGSSSHPAESADKKEDIEAAGRAVVKMLELGLKPSDILTREAFEDAITVTMALGGSTNATLHLLAIAHAANVDLSLEDFNTIQERVPHLADLKPSGQYVFQDLYEVGGVPAVMKYLLANGFLHGDRITCTGKTVAENLADFADLTPGQKVIMPLENPKRADGPLIILNGNLAPDGAVAKVSGVKVRRHVGPAKVFDSEEDAIQAVLTDEIVDGDVVVVRFVGPKGGPGMPEMLSLSSMIVGKGQGDKVALLTDGRFSGGTYGLVVGHIAPEAQDGGPIAYLRTGDIVTVDQDTKEISMAVSEEELEKRKAETTLPPLYSRGVLGKYAHIVSSASRGAVTDFWNMDKSGKK</sequence>
<dbReference type="EC" id="4.2.1.9" evidence="1"/>
<dbReference type="EMBL" id="CP000936">
    <property type="protein sequence ID" value="ACA35823.1"/>
    <property type="molecule type" value="Genomic_DNA"/>
</dbReference>
<dbReference type="RefSeq" id="WP_000137358.1">
    <property type="nucleotide sequence ID" value="NC_010380.1"/>
</dbReference>
<dbReference type="SMR" id="B1I9U2"/>
<dbReference type="KEGG" id="spv:SPH_2318"/>
<dbReference type="HOGENOM" id="CLU_014271_4_2_9"/>
<dbReference type="UniPathway" id="UPA00047">
    <property type="reaction ID" value="UER00057"/>
</dbReference>
<dbReference type="UniPathway" id="UPA00049">
    <property type="reaction ID" value="UER00061"/>
</dbReference>
<dbReference type="Proteomes" id="UP000002163">
    <property type="component" value="Chromosome"/>
</dbReference>
<dbReference type="GO" id="GO:0051537">
    <property type="term" value="F:2 iron, 2 sulfur cluster binding"/>
    <property type="evidence" value="ECO:0007669"/>
    <property type="project" value="UniProtKB-UniRule"/>
</dbReference>
<dbReference type="GO" id="GO:0004160">
    <property type="term" value="F:dihydroxy-acid dehydratase activity"/>
    <property type="evidence" value="ECO:0007669"/>
    <property type="project" value="UniProtKB-UniRule"/>
</dbReference>
<dbReference type="GO" id="GO:0000287">
    <property type="term" value="F:magnesium ion binding"/>
    <property type="evidence" value="ECO:0007669"/>
    <property type="project" value="UniProtKB-UniRule"/>
</dbReference>
<dbReference type="GO" id="GO:0009097">
    <property type="term" value="P:isoleucine biosynthetic process"/>
    <property type="evidence" value="ECO:0007669"/>
    <property type="project" value="UniProtKB-UniRule"/>
</dbReference>
<dbReference type="GO" id="GO:0009099">
    <property type="term" value="P:L-valine biosynthetic process"/>
    <property type="evidence" value="ECO:0007669"/>
    <property type="project" value="UniProtKB-UniRule"/>
</dbReference>
<dbReference type="FunFam" id="3.50.30.80:FF:000001">
    <property type="entry name" value="Dihydroxy-acid dehydratase"/>
    <property type="match status" value="1"/>
</dbReference>
<dbReference type="Gene3D" id="3.50.30.80">
    <property type="entry name" value="IlvD/EDD C-terminal domain-like"/>
    <property type="match status" value="1"/>
</dbReference>
<dbReference type="HAMAP" id="MF_00012">
    <property type="entry name" value="IlvD"/>
    <property type="match status" value="1"/>
</dbReference>
<dbReference type="InterPro" id="IPR050165">
    <property type="entry name" value="DHAD_IlvD/Edd"/>
</dbReference>
<dbReference type="InterPro" id="IPR042096">
    <property type="entry name" value="Dihydro-acid_dehy_C"/>
</dbReference>
<dbReference type="InterPro" id="IPR004404">
    <property type="entry name" value="DihydroxyA_deHydtase"/>
</dbReference>
<dbReference type="InterPro" id="IPR020558">
    <property type="entry name" value="DiOHA_6PGluconate_deHydtase_CS"/>
</dbReference>
<dbReference type="InterPro" id="IPR056740">
    <property type="entry name" value="ILV_EDD_C"/>
</dbReference>
<dbReference type="InterPro" id="IPR000581">
    <property type="entry name" value="ILV_EDD_N"/>
</dbReference>
<dbReference type="InterPro" id="IPR037237">
    <property type="entry name" value="IlvD/EDD_N"/>
</dbReference>
<dbReference type="NCBIfam" id="TIGR00110">
    <property type="entry name" value="ilvD"/>
    <property type="match status" value="1"/>
</dbReference>
<dbReference type="NCBIfam" id="NF002068">
    <property type="entry name" value="PRK00911.1"/>
    <property type="match status" value="1"/>
</dbReference>
<dbReference type="PANTHER" id="PTHR21000">
    <property type="entry name" value="DIHYDROXY-ACID DEHYDRATASE DAD"/>
    <property type="match status" value="1"/>
</dbReference>
<dbReference type="PANTHER" id="PTHR21000:SF5">
    <property type="entry name" value="DIHYDROXY-ACID DEHYDRATASE, MITOCHONDRIAL"/>
    <property type="match status" value="1"/>
</dbReference>
<dbReference type="Pfam" id="PF24877">
    <property type="entry name" value="ILV_EDD_C"/>
    <property type="match status" value="1"/>
</dbReference>
<dbReference type="Pfam" id="PF00920">
    <property type="entry name" value="ILVD_EDD_N"/>
    <property type="match status" value="1"/>
</dbReference>
<dbReference type="SUPFAM" id="SSF143975">
    <property type="entry name" value="IlvD/EDD N-terminal domain-like"/>
    <property type="match status" value="1"/>
</dbReference>
<dbReference type="SUPFAM" id="SSF52016">
    <property type="entry name" value="LeuD/IlvD-like"/>
    <property type="match status" value="1"/>
</dbReference>
<dbReference type="PROSITE" id="PS00886">
    <property type="entry name" value="ILVD_EDD_1"/>
    <property type="match status" value="1"/>
</dbReference>
<dbReference type="PROSITE" id="PS00887">
    <property type="entry name" value="ILVD_EDD_2"/>
    <property type="match status" value="1"/>
</dbReference>
<comment type="function">
    <text evidence="1">Functions in the biosynthesis of branched-chain amino acids. Catalyzes the dehydration of (2R,3R)-2,3-dihydroxy-3-methylpentanoate (2,3-dihydroxy-3-methylvalerate) into 2-oxo-3-methylpentanoate (2-oxo-3-methylvalerate) and of (2R)-2,3-dihydroxy-3-methylbutanoate (2,3-dihydroxyisovalerate) into 2-oxo-3-methylbutanoate (2-oxoisovalerate), the penultimate precursor to L-isoleucine and L-valine, respectively.</text>
</comment>
<comment type="catalytic activity">
    <reaction evidence="1">
        <text>(2R)-2,3-dihydroxy-3-methylbutanoate = 3-methyl-2-oxobutanoate + H2O</text>
        <dbReference type="Rhea" id="RHEA:24809"/>
        <dbReference type="ChEBI" id="CHEBI:11851"/>
        <dbReference type="ChEBI" id="CHEBI:15377"/>
        <dbReference type="ChEBI" id="CHEBI:49072"/>
        <dbReference type="EC" id="4.2.1.9"/>
    </reaction>
    <physiologicalReaction direction="left-to-right" evidence="1">
        <dbReference type="Rhea" id="RHEA:24810"/>
    </physiologicalReaction>
</comment>
<comment type="catalytic activity">
    <reaction evidence="1">
        <text>(2R,3R)-2,3-dihydroxy-3-methylpentanoate = (S)-3-methyl-2-oxopentanoate + H2O</text>
        <dbReference type="Rhea" id="RHEA:27694"/>
        <dbReference type="ChEBI" id="CHEBI:15377"/>
        <dbReference type="ChEBI" id="CHEBI:35146"/>
        <dbReference type="ChEBI" id="CHEBI:49258"/>
        <dbReference type="EC" id="4.2.1.9"/>
    </reaction>
    <physiologicalReaction direction="left-to-right" evidence="1">
        <dbReference type="Rhea" id="RHEA:27695"/>
    </physiologicalReaction>
</comment>
<comment type="cofactor">
    <cofactor evidence="1">
        <name>[2Fe-2S] cluster</name>
        <dbReference type="ChEBI" id="CHEBI:190135"/>
    </cofactor>
    <text evidence="1">Binds 1 [2Fe-2S] cluster per subunit. This cluster acts as a Lewis acid cofactor.</text>
</comment>
<comment type="cofactor">
    <cofactor evidence="1">
        <name>Mg(2+)</name>
        <dbReference type="ChEBI" id="CHEBI:18420"/>
    </cofactor>
</comment>
<comment type="pathway">
    <text evidence="1">Amino-acid biosynthesis; L-isoleucine biosynthesis; L-isoleucine from 2-oxobutanoate: step 3/4.</text>
</comment>
<comment type="pathway">
    <text evidence="1">Amino-acid biosynthesis; L-valine biosynthesis; L-valine from pyruvate: step 3/4.</text>
</comment>
<comment type="subunit">
    <text evidence="1">Homodimer.</text>
</comment>
<comment type="similarity">
    <text evidence="1">Belongs to the IlvD/Edd family.</text>
</comment>
<feature type="chain" id="PRO_1000089420" description="Dihydroxy-acid dehydratase">
    <location>
        <begin position="1"/>
        <end position="567"/>
    </location>
</feature>
<feature type="active site" description="Proton acceptor" evidence="1">
    <location>
        <position position="474"/>
    </location>
</feature>
<feature type="binding site" evidence="1">
    <location>
        <position position="52"/>
    </location>
    <ligand>
        <name>[2Fe-2S] cluster</name>
        <dbReference type="ChEBI" id="CHEBI:190135"/>
    </ligand>
</feature>
<feature type="binding site" evidence="1">
    <location>
        <position position="84"/>
    </location>
    <ligand>
        <name>Mg(2+)</name>
        <dbReference type="ChEBI" id="CHEBI:18420"/>
    </ligand>
</feature>
<feature type="binding site" evidence="1">
    <location>
        <position position="125"/>
    </location>
    <ligand>
        <name>[2Fe-2S] cluster</name>
        <dbReference type="ChEBI" id="CHEBI:190135"/>
    </ligand>
</feature>
<feature type="binding site" evidence="1">
    <location>
        <position position="126"/>
    </location>
    <ligand>
        <name>Mg(2+)</name>
        <dbReference type="ChEBI" id="CHEBI:18420"/>
    </ligand>
</feature>
<feature type="binding site" description="via carbamate group" evidence="1">
    <location>
        <position position="127"/>
    </location>
    <ligand>
        <name>Mg(2+)</name>
        <dbReference type="ChEBI" id="CHEBI:18420"/>
    </ligand>
</feature>
<feature type="binding site" evidence="1">
    <location>
        <position position="197"/>
    </location>
    <ligand>
        <name>[2Fe-2S] cluster</name>
        <dbReference type="ChEBI" id="CHEBI:190135"/>
    </ligand>
</feature>
<feature type="binding site" evidence="1">
    <location>
        <position position="448"/>
    </location>
    <ligand>
        <name>Mg(2+)</name>
        <dbReference type="ChEBI" id="CHEBI:18420"/>
    </ligand>
</feature>
<feature type="modified residue" description="N6-carboxylysine" evidence="1">
    <location>
        <position position="127"/>
    </location>
</feature>